<feature type="chain" id="PRO_1000096218" description="Elongation factor P">
    <location>
        <begin position="1"/>
        <end position="185"/>
    </location>
</feature>
<reference key="1">
    <citation type="submission" date="2008-01" db="EMBL/GenBank/DDBJ databases">
        <title>Complete sequence of Thermoanaerobacter sp. X514.</title>
        <authorList>
            <consortium name="US DOE Joint Genome Institute"/>
            <person name="Copeland A."/>
            <person name="Lucas S."/>
            <person name="Lapidus A."/>
            <person name="Barry K."/>
            <person name="Glavina del Rio T."/>
            <person name="Dalin E."/>
            <person name="Tice H."/>
            <person name="Pitluck S."/>
            <person name="Bruce D."/>
            <person name="Goodwin L."/>
            <person name="Saunders E."/>
            <person name="Brettin T."/>
            <person name="Detter J.C."/>
            <person name="Han C."/>
            <person name="Schmutz J."/>
            <person name="Larimer F."/>
            <person name="Land M."/>
            <person name="Hauser L."/>
            <person name="Kyrpides N."/>
            <person name="Kim E."/>
            <person name="Hemme C."/>
            <person name="Fields M.W."/>
            <person name="He Z."/>
            <person name="Zhou J."/>
            <person name="Richardson P."/>
        </authorList>
    </citation>
    <scope>NUCLEOTIDE SEQUENCE [LARGE SCALE GENOMIC DNA]</scope>
    <source>
        <strain>X514</strain>
    </source>
</reference>
<accession>B0K0T5</accession>
<proteinExistence type="inferred from homology"/>
<comment type="function">
    <text evidence="1">Involved in peptide bond synthesis. Stimulates efficient translation and peptide-bond synthesis on native or reconstituted 70S ribosomes in vitro. Probably functions indirectly by altering the affinity of the ribosome for aminoacyl-tRNA, thus increasing their reactivity as acceptors for peptidyl transferase.</text>
</comment>
<comment type="pathway">
    <text evidence="1">Protein biosynthesis; polypeptide chain elongation.</text>
</comment>
<comment type="subcellular location">
    <subcellularLocation>
        <location evidence="1">Cytoplasm</location>
    </subcellularLocation>
</comment>
<comment type="similarity">
    <text evidence="1">Belongs to the elongation factor P family.</text>
</comment>
<name>EFP_THEPX</name>
<gene>
    <name evidence="1" type="primary">efp</name>
    <name type="ordered locus">Teth514_1523</name>
</gene>
<sequence length="185" mass="20878">MIAAGDFRKGVTIEVDGQVFTVVDFMHVKPGKGAAFVRTKLKNVMTGAVIEKTFSPTEKFEEAVIERREMQYLYNDGELYYFMDTETYEQIPLNYDKVEDAIKYIKENMVVTVKFYKGEAFSVEPPTFVELEVVETEPGFRGDTATGGSKPATVETGAVIQVPLFINVGDKIRIDTRTGEYLERV</sequence>
<dbReference type="EMBL" id="CP000923">
    <property type="protein sequence ID" value="ABY92810.1"/>
    <property type="molecule type" value="Genomic_DNA"/>
</dbReference>
<dbReference type="RefSeq" id="WP_009052330.1">
    <property type="nucleotide sequence ID" value="NC_010320.1"/>
</dbReference>
<dbReference type="SMR" id="B0K0T5"/>
<dbReference type="KEGG" id="tex:Teth514_1523"/>
<dbReference type="HOGENOM" id="CLU_074944_0_1_9"/>
<dbReference type="UniPathway" id="UPA00345"/>
<dbReference type="Proteomes" id="UP000002155">
    <property type="component" value="Chromosome"/>
</dbReference>
<dbReference type="GO" id="GO:0005737">
    <property type="term" value="C:cytoplasm"/>
    <property type="evidence" value="ECO:0007669"/>
    <property type="project" value="UniProtKB-SubCell"/>
</dbReference>
<dbReference type="GO" id="GO:0003746">
    <property type="term" value="F:translation elongation factor activity"/>
    <property type="evidence" value="ECO:0007669"/>
    <property type="project" value="UniProtKB-UniRule"/>
</dbReference>
<dbReference type="GO" id="GO:0043043">
    <property type="term" value="P:peptide biosynthetic process"/>
    <property type="evidence" value="ECO:0007669"/>
    <property type="project" value="InterPro"/>
</dbReference>
<dbReference type="CDD" id="cd04470">
    <property type="entry name" value="S1_EF-P_repeat_1"/>
    <property type="match status" value="1"/>
</dbReference>
<dbReference type="CDD" id="cd05794">
    <property type="entry name" value="S1_EF-P_repeat_2"/>
    <property type="match status" value="1"/>
</dbReference>
<dbReference type="FunFam" id="2.30.30.30:FF:000003">
    <property type="entry name" value="Elongation factor P"/>
    <property type="match status" value="1"/>
</dbReference>
<dbReference type="FunFam" id="2.40.50.140:FF:000004">
    <property type="entry name" value="Elongation factor P"/>
    <property type="match status" value="1"/>
</dbReference>
<dbReference type="FunFam" id="2.40.50.140:FF:000009">
    <property type="entry name" value="Elongation factor P"/>
    <property type="match status" value="1"/>
</dbReference>
<dbReference type="Gene3D" id="2.30.30.30">
    <property type="match status" value="1"/>
</dbReference>
<dbReference type="Gene3D" id="2.40.50.140">
    <property type="entry name" value="Nucleic acid-binding proteins"/>
    <property type="match status" value="2"/>
</dbReference>
<dbReference type="HAMAP" id="MF_00141">
    <property type="entry name" value="EF_P"/>
    <property type="match status" value="1"/>
</dbReference>
<dbReference type="InterPro" id="IPR015365">
    <property type="entry name" value="Elong-fact-P_C"/>
</dbReference>
<dbReference type="InterPro" id="IPR012340">
    <property type="entry name" value="NA-bd_OB-fold"/>
</dbReference>
<dbReference type="InterPro" id="IPR014722">
    <property type="entry name" value="Rib_uL2_dom2"/>
</dbReference>
<dbReference type="InterPro" id="IPR020599">
    <property type="entry name" value="Transl_elong_fac_P/YeiP"/>
</dbReference>
<dbReference type="InterPro" id="IPR013185">
    <property type="entry name" value="Transl_elong_KOW-like"/>
</dbReference>
<dbReference type="InterPro" id="IPR001059">
    <property type="entry name" value="Transl_elong_P/YeiP_cen"/>
</dbReference>
<dbReference type="InterPro" id="IPR013852">
    <property type="entry name" value="Transl_elong_P/YeiP_CS"/>
</dbReference>
<dbReference type="InterPro" id="IPR011768">
    <property type="entry name" value="Transl_elongation_fac_P"/>
</dbReference>
<dbReference type="InterPro" id="IPR008991">
    <property type="entry name" value="Translation_prot_SH3-like_sf"/>
</dbReference>
<dbReference type="NCBIfam" id="TIGR00038">
    <property type="entry name" value="efp"/>
    <property type="match status" value="1"/>
</dbReference>
<dbReference type="NCBIfam" id="NF001810">
    <property type="entry name" value="PRK00529.1"/>
    <property type="match status" value="1"/>
</dbReference>
<dbReference type="PANTHER" id="PTHR30053">
    <property type="entry name" value="ELONGATION FACTOR P"/>
    <property type="match status" value="1"/>
</dbReference>
<dbReference type="PANTHER" id="PTHR30053:SF12">
    <property type="entry name" value="ELONGATION FACTOR P (EF-P) FAMILY PROTEIN"/>
    <property type="match status" value="1"/>
</dbReference>
<dbReference type="Pfam" id="PF01132">
    <property type="entry name" value="EFP"/>
    <property type="match status" value="1"/>
</dbReference>
<dbReference type="Pfam" id="PF08207">
    <property type="entry name" value="EFP_N"/>
    <property type="match status" value="1"/>
</dbReference>
<dbReference type="Pfam" id="PF09285">
    <property type="entry name" value="Elong-fact-P_C"/>
    <property type="match status" value="1"/>
</dbReference>
<dbReference type="PIRSF" id="PIRSF005901">
    <property type="entry name" value="EF-P"/>
    <property type="match status" value="1"/>
</dbReference>
<dbReference type="SMART" id="SM01185">
    <property type="entry name" value="EFP"/>
    <property type="match status" value="1"/>
</dbReference>
<dbReference type="SMART" id="SM00841">
    <property type="entry name" value="Elong-fact-P_C"/>
    <property type="match status" value="1"/>
</dbReference>
<dbReference type="SUPFAM" id="SSF50249">
    <property type="entry name" value="Nucleic acid-binding proteins"/>
    <property type="match status" value="2"/>
</dbReference>
<dbReference type="SUPFAM" id="SSF50104">
    <property type="entry name" value="Translation proteins SH3-like domain"/>
    <property type="match status" value="1"/>
</dbReference>
<dbReference type="PROSITE" id="PS01275">
    <property type="entry name" value="EFP"/>
    <property type="match status" value="1"/>
</dbReference>
<evidence type="ECO:0000255" key="1">
    <source>
        <dbReference type="HAMAP-Rule" id="MF_00141"/>
    </source>
</evidence>
<keyword id="KW-0963">Cytoplasm</keyword>
<keyword id="KW-0251">Elongation factor</keyword>
<keyword id="KW-0648">Protein biosynthesis</keyword>
<protein>
    <recommendedName>
        <fullName evidence="1">Elongation factor P</fullName>
        <shortName evidence="1">EF-P</shortName>
    </recommendedName>
</protein>
<organism>
    <name type="scientific">Thermoanaerobacter sp. (strain X514)</name>
    <dbReference type="NCBI Taxonomy" id="399726"/>
    <lineage>
        <taxon>Bacteria</taxon>
        <taxon>Bacillati</taxon>
        <taxon>Bacillota</taxon>
        <taxon>Clostridia</taxon>
        <taxon>Thermoanaerobacterales</taxon>
        <taxon>Thermoanaerobacteraceae</taxon>
        <taxon>Thermoanaerobacter</taxon>
    </lineage>
</organism>